<feature type="chain" id="PRO_1000197076" description="N-(5'-phosphoribosyl)anthranilate isomerase">
    <location>
        <begin position="1"/>
        <end position="204"/>
    </location>
</feature>
<protein>
    <recommendedName>
        <fullName evidence="1">N-(5'-phosphoribosyl)anthranilate isomerase</fullName>
        <shortName evidence="1">PRAI</shortName>
        <ecNumber evidence="1">5.3.1.24</ecNumber>
    </recommendedName>
</protein>
<proteinExistence type="inferred from homology"/>
<name>TRPF_BACC7</name>
<organism>
    <name type="scientific">Bacillus cereus (strain AH187)</name>
    <dbReference type="NCBI Taxonomy" id="405534"/>
    <lineage>
        <taxon>Bacteria</taxon>
        <taxon>Bacillati</taxon>
        <taxon>Bacillota</taxon>
        <taxon>Bacilli</taxon>
        <taxon>Bacillales</taxon>
        <taxon>Bacillaceae</taxon>
        <taxon>Bacillus</taxon>
        <taxon>Bacillus cereus group</taxon>
    </lineage>
</organism>
<evidence type="ECO:0000255" key="1">
    <source>
        <dbReference type="HAMAP-Rule" id="MF_00135"/>
    </source>
</evidence>
<accession>B7I0F1</accession>
<gene>
    <name evidence="1" type="primary">trpF</name>
    <name type="ordered locus">BCAH187_A1397</name>
</gene>
<comment type="catalytic activity">
    <reaction evidence="1">
        <text>N-(5-phospho-beta-D-ribosyl)anthranilate = 1-(2-carboxyphenylamino)-1-deoxy-D-ribulose 5-phosphate</text>
        <dbReference type="Rhea" id="RHEA:21540"/>
        <dbReference type="ChEBI" id="CHEBI:18277"/>
        <dbReference type="ChEBI" id="CHEBI:58613"/>
        <dbReference type="EC" id="5.3.1.24"/>
    </reaction>
</comment>
<comment type="pathway">
    <text evidence="1">Amino-acid biosynthesis; L-tryptophan biosynthesis; L-tryptophan from chorismate: step 3/5.</text>
</comment>
<comment type="similarity">
    <text evidence="1">Belongs to the TrpF family.</text>
</comment>
<keyword id="KW-0028">Amino-acid biosynthesis</keyword>
<keyword id="KW-0057">Aromatic amino acid biosynthesis</keyword>
<keyword id="KW-0413">Isomerase</keyword>
<keyword id="KW-0822">Tryptophan biosynthesis</keyword>
<sequence>MKVKICGITDMETAKRACEYGADALGFVFAESKRKITPGLAKEIIQELPANVLKIGVFVNESVEVIQKITENCGLTHVQLHGDEDNHQIRRLNIPSIKALGVTSEIDMKNAQAYKTDYILFDSPKERFYGGNGKKFSWELLAHMSKKLREKTILAGGLNALNIEEAIRTVRPYMVDVSSGVETEGKKDVEKIKQFIIKAKECSK</sequence>
<dbReference type="EC" id="5.3.1.24" evidence="1"/>
<dbReference type="EMBL" id="CP001177">
    <property type="protein sequence ID" value="ACJ81948.1"/>
    <property type="molecule type" value="Genomic_DNA"/>
</dbReference>
<dbReference type="SMR" id="B7I0F1"/>
<dbReference type="KEGG" id="bcr:BCAH187_A1397"/>
<dbReference type="HOGENOM" id="CLU_076364_1_0_9"/>
<dbReference type="UniPathway" id="UPA00035">
    <property type="reaction ID" value="UER00042"/>
</dbReference>
<dbReference type="Proteomes" id="UP000002214">
    <property type="component" value="Chromosome"/>
</dbReference>
<dbReference type="GO" id="GO:0004640">
    <property type="term" value="F:phosphoribosylanthranilate isomerase activity"/>
    <property type="evidence" value="ECO:0007669"/>
    <property type="project" value="UniProtKB-UniRule"/>
</dbReference>
<dbReference type="GO" id="GO:0000162">
    <property type="term" value="P:L-tryptophan biosynthetic process"/>
    <property type="evidence" value="ECO:0007669"/>
    <property type="project" value="UniProtKB-UniRule"/>
</dbReference>
<dbReference type="CDD" id="cd00405">
    <property type="entry name" value="PRAI"/>
    <property type="match status" value="1"/>
</dbReference>
<dbReference type="FunFam" id="3.20.20.70:FF:000075">
    <property type="entry name" value="Tryptophan biosynthesis protein TRP1"/>
    <property type="match status" value="1"/>
</dbReference>
<dbReference type="Gene3D" id="3.20.20.70">
    <property type="entry name" value="Aldolase class I"/>
    <property type="match status" value="1"/>
</dbReference>
<dbReference type="HAMAP" id="MF_00135">
    <property type="entry name" value="PRAI"/>
    <property type="match status" value="1"/>
</dbReference>
<dbReference type="InterPro" id="IPR013785">
    <property type="entry name" value="Aldolase_TIM"/>
</dbReference>
<dbReference type="InterPro" id="IPR001240">
    <property type="entry name" value="PRAI_dom"/>
</dbReference>
<dbReference type="InterPro" id="IPR011060">
    <property type="entry name" value="RibuloseP-bd_barrel"/>
</dbReference>
<dbReference type="InterPro" id="IPR044643">
    <property type="entry name" value="TrpF_fam"/>
</dbReference>
<dbReference type="NCBIfam" id="NF002297">
    <property type="entry name" value="PRK01222.1-3"/>
    <property type="match status" value="1"/>
</dbReference>
<dbReference type="NCBIfam" id="NF002298">
    <property type="entry name" value="PRK01222.1-4"/>
    <property type="match status" value="1"/>
</dbReference>
<dbReference type="PANTHER" id="PTHR42894">
    <property type="entry name" value="N-(5'-PHOSPHORIBOSYL)ANTHRANILATE ISOMERASE"/>
    <property type="match status" value="1"/>
</dbReference>
<dbReference type="PANTHER" id="PTHR42894:SF1">
    <property type="entry name" value="N-(5'-PHOSPHORIBOSYL)ANTHRANILATE ISOMERASE"/>
    <property type="match status" value="1"/>
</dbReference>
<dbReference type="Pfam" id="PF00697">
    <property type="entry name" value="PRAI"/>
    <property type="match status" value="1"/>
</dbReference>
<dbReference type="SUPFAM" id="SSF51366">
    <property type="entry name" value="Ribulose-phoshate binding barrel"/>
    <property type="match status" value="1"/>
</dbReference>
<reference key="1">
    <citation type="submission" date="2008-10" db="EMBL/GenBank/DDBJ databases">
        <title>Genome sequence of Bacillus cereus AH187.</title>
        <authorList>
            <person name="Dodson R.J."/>
            <person name="Durkin A.S."/>
            <person name="Rosovitz M.J."/>
            <person name="Rasko D.A."/>
            <person name="Kolsto A.B."/>
            <person name="Okstad O.A."/>
            <person name="Ravel J."/>
            <person name="Sutton G."/>
        </authorList>
    </citation>
    <scope>NUCLEOTIDE SEQUENCE [LARGE SCALE GENOMIC DNA]</scope>
    <source>
        <strain>AH187</strain>
    </source>
</reference>